<gene>
    <name evidence="1" type="primary">ade</name>
    <name type="ordered locus">AF_0240</name>
</gene>
<organism>
    <name type="scientific">Archaeoglobus fulgidus (strain ATCC 49558 / DSM 4304 / JCM 9628 / NBRC 100126 / VC-16)</name>
    <dbReference type="NCBI Taxonomy" id="224325"/>
    <lineage>
        <taxon>Archaea</taxon>
        <taxon>Methanobacteriati</taxon>
        <taxon>Methanobacteriota</taxon>
        <taxon>Archaeoglobi</taxon>
        <taxon>Archaeoglobales</taxon>
        <taxon>Archaeoglobaceae</taxon>
        <taxon>Archaeoglobus</taxon>
    </lineage>
</organism>
<feature type="chain" id="PRO_0000142438" description="Adenine deaminase">
    <location>
        <begin position="1"/>
        <end position="556"/>
    </location>
</feature>
<name>ADEC_ARCFU</name>
<reference key="1">
    <citation type="journal article" date="1997" name="Nature">
        <title>The complete genome sequence of the hyperthermophilic, sulphate-reducing archaeon Archaeoglobus fulgidus.</title>
        <authorList>
            <person name="Klenk H.-P."/>
            <person name="Clayton R.A."/>
            <person name="Tomb J.-F."/>
            <person name="White O."/>
            <person name="Nelson K.E."/>
            <person name="Ketchum K.A."/>
            <person name="Dodson R.J."/>
            <person name="Gwinn M.L."/>
            <person name="Hickey E.K."/>
            <person name="Peterson J.D."/>
            <person name="Richardson D.L."/>
            <person name="Kerlavage A.R."/>
            <person name="Graham D.E."/>
            <person name="Kyrpides N.C."/>
            <person name="Fleischmann R.D."/>
            <person name="Quackenbush J."/>
            <person name="Lee N.H."/>
            <person name="Sutton G.G."/>
            <person name="Gill S.R."/>
            <person name="Kirkness E.F."/>
            <person name="Dougherty B.A."/>
            <person name="McKenney K."/>
            <person name="Adams M.D."/>
            <person name="Loftus B.J."/>
            <person name="Peterson S.N."/>
            <person name="Reich C.I."/>
            <person name="McNeil L.K."/>
            <person name="Badger J.H."/>
            <person name="Glodek A."/>
            <person name="Zhou L."/>
            <person name="Overbeek R."/>
            <person name="Gocayne J.D."/>
            <person name="Weidman J.F."/>
            <person name="McDonald L.A."/>
            <person name="Utterback T.R."/>
            <person name="Cotton M.D."/>
            <person name="Spriggs T."/>
            <person name="Artiach P."/>
            <person name="Kaine B.P."/>
            <person name="Sykes S.M."/>
            <person name="Sadow P.W."/>
            <person name="D'Andrea K.P."/>
            <person name="Bowman C."/>
            <person name="Fujii C."/>
            <person name="Garland S.A."/>
            <person name="Mason T.M."/>
            <person name="Olsen G.J."/>
            <person name="Fraser C.M."/>
            <person name="Smith H.O."/>
            <person name="Woese C.R."/>
            <person name="Venter J.C."/>
        </authorList>
    </citation>
    <scope>NUCLEOTIDE SEQUENCE [LARGE SCALE GENOMIC DNA]</scope>
    <source>
        <strain>ATCC 49558 / DSM 4304 / JCM 9628 / NBRC 100126 / VC-16</strain>
    </source>
</reference>
<comment type="catalytic activity">
    <reaction evidence="1">
        <text>adenine + H2O + H(+) = hypoxanthine + NH4(+)</text>
        <dbReference type="Rhea" id="RHEA:23688"/>
        <dbReference type="ChEBI" id="CHEBI:15377"/>
        <dbReference type="ChEBI" id="CHEBI:15378"/>
        <dbReference type="ChEBI" id="CHEBI:16708"/>
        <dbReference type="ChEBI" id="CHEBI:17368"/>
        <dbReference type="ChEBI" id="CHEBI:28938"/>
        <dbReference type="EC" id="3.5.4.2"/>
    </reaction>
</comment>
<comment type="cofactor">
    <cofactor evidence="1">
        <name>Mn(2+)</name>
        <dbReference type="ChEBI" id="CHEBI:29035"/>
    </cofactor>
</comment>
<comment type="similarity">
    <text evidence="1">Belongs to the metallo-dependent hydrolases superfamily. Adenine deaminase family.</text>
</comment>
<sequence>MSSPTADVEKLRRIIEVARGDRRADFVVKNAQIVDLVNEEIFEGDIAVAEGFIAGIGSYSGVEECEASNLVAVPGLIDAHTHIEMSMLTVSEFARLVVPRGTTGVVADPHEIANVLGKDGVMLMLEEARSTPLRFYCMVPSCVPSSPLETSGARIGVEEIRELLEEEEVLGLAEMMNFPGVVSADREVLEKIVLAGIVDGHAPGLRGKKLNAYIAAGASSDHETTSFEEGKEKLRLGMWVMIREGSAARNLVALKGLTGNRHTMLVTDGDRSVKDIIEEGYLDHVFRRAIEEGIDEIKALQMLTLNPAEYFGINAGLIAPSRLADIVLLKNLRKFEVRDVFVGGRRPEFKRFNHPEWAKKTVKARKITPESIQLKTGRVRVIEVYDGEIVTGEAIEEVQGVDVERDILKAVVVERHIRSGRVGKAYVRGFGLKRGAIAQSIAHDAHNIVCVGVDDGSICAAVNRVIELQGGIVVADAEVRAELPLPIAGIMSDERAERVLERLSEIEEEVRKLGCRLKSPVITLSFIALPVIPKLKLTDLGLVDVEAFRVVDLQAD</sequence>
<accession>O29999</accession>
<evidence type="ECO:0000255" key="1">
    <source>
        <dbReference type="HAMAP-Rule" id="MF_01518"/>
    </source>
</evidence>
<proteinExistence type="inferred from homology"/>
<keyword id="KW-0378">Hydrolase</keyword>
<keyword id="KW-0464">Manganese</keyword>
<keyword id="KW-1185">Reference proteome</keyword>
<dbReference type="EC" id="3.5.4.2" evidence="1"/>
<dbReference type="EMBL" id="AE000782">
    <property type="protein sequence ID" value="AAB90993.1"/>
    <property type="molecule type" value="Genomic_DNA"/>
</dbReference>
<dbReference type="PIR" id="H69279">
    <property type="entry name" value="H69279"/>
</dbReference>
<dbReference type="RefSeq" id="WP_010877751.1">
    <property type="nucleotide sequence ID" value="NC_000917.1"/>
</dbReference>
<dbReference type="SMR" id="O29999"/>
<dbReference type="STRING" id="224325.AF_0240"/>
<dbReference type="PaxDb" id="224325-AF_0240"/>
<dbReference type="DNASU" id="1483451"/>
<dbReference type="EnsemblBacteria" id="AAB90993">
    <property type="protein sequence ID" value="AAB90993"/>
    <property type="gene ID" value="AF_0240"/>
</dbReference>
<dbReference type="GeneID" id="1483451"/>
<dbReference type="KEGG" id="afu:AF_0240"/>
<dbReference type="eggNOG" id="arCOG00693">
    <property type="taxonomic scope" value="Archaea"/>
</dbReference>
<dbReference type="HOGENOM" id="CLU_027935_0_0_2"/>
<dbReference type="OrthoDB" id="24954at2157"/>
<dbReference type="PhylomeDB" id="O29999"/>
<dbReference type="Proteomes" id="UP000002199">
    <property type="component" value="Chromosome"/>
</dbReference>
<dbReference type="GO" id="GO:0000034">
    <property type="term" value="F:adenine deaminase activity"/>
    <property type="evidence" value="ECO:0007669"/>
    <property type="project" value="UniProtKB-UniRule"/>
</dbReference>
<dbReference type="GO" id="GO:0006146">
    <property type="term" value="P:adenine catabolic process"/>
    <property type="evidence" value="ECO:0007669"/>
    <property type="project" value="InterPro"/>
</dbReference>
<dbReference type="CDD" id="cd01295">
    <property type="entry name" value="AdeC"/>
    <property type="match status" value="1"/>
</dbReference>
<dbReference type="Gene3D" id="3.20.20.140">
    <property type="entry name" value="Metal-dependent hydrolases"/>
    <property type="match status" value="1"/>
</dbReference>
<dbReference type="Gene3D" id="2.30.40.10">
    <property type="entry name" value="Urease, subunit C, domain 1"/>
    <property type="match status" value="1"/>
</dbReference>
<dbReference type="HAMAP" id="MF_01518">
    <property type="entry name" value="Adenine_deamin"/>
    <property type="match status" value="1"/>
</dbReference>
<dbReference type="InterPro" id="IPR006679">
    <property type="entry name" value="Adenine_deam"/>
</dbReference>
<dbReference type="InterPro" id="IPR026912">
    <property type="entry name" value="Adenine_deam_C"/>
</dbReference>
<dbReference type="InterPro" id="IPR006680">
    <property type="entry name" value="Amidohydro-rel"/>
</dbReference>
<dbReference type="InterPro" id="IPR011059">
    <property type="entry name" value="Metal-dep_hydrolase_composite"/>
</dbReference>
<dbReference type="InterPro" id="IPR032466">
    <property type="entry name" value="Metal_Hydrolase"/>
</dbReference>
<dbReference type="NCBIfam" id="TIGR01178">
    <property type="entry name" value="ade"/>
    <property type="match status" value="1"/>
</dbReference>
<dbReference type="PANTHER" id="PTHR11113:SF2">
    <property type="entry name" value="ADENINE DEAMINASE"/>
    <property type="match status" value="1"/>
</dbReference>
<dbReference type="PANTHER" id="PTHR11113">
    <property type="entry name" value="N-ACETYLGLUCOSAMINE-6-PHOSPHATE DEACETYLASE"/>
    <property type="match status" value="1"/>
</dbReference>
<dbReference type="Pfam" id="PF13382">
    <property type="entry name" value="Adenine_deam_C"/>
    <property type="match status" value="1"/>
</dbReference>
<dbReference type="Pfam" id="PF01979">
    <property type="entry name" value="Amidohydro_1"/>
    <property type="match status" value="1"/>
</dbReference>
<dbReference type="SUPFAM" id="SSF51338">
    <property type="entry name" value="Composite domain of metallo-dependent hydrolases"/>
    <property type="match status" value="1"/>
</dbReference>
<dbReference type="SUPFAM" id="SSF51556">
    <property type="entry name" value="Metallo-dependent hydrolases"/>
    <property type="match status" value="1"/>
</dbReference>
<protein>
    <recommendedName>
        <fullName evidence="1">Adenine deaminase</fullName>
        <shortName evidence="1">Adenase</shortName>
        <shortName evidence="1">Adenine aminase</shortName>
        <ecNumber evidence="1">3.5.4.2</ecNumber>
    </recommendedName>
</protein>